<reference key="1">
    <citation type="journal article" date="1983" name="Proc. Natl. Acad. Sci. U.S.A.">
        <title>Tissue-specific expression of a chicken calmodulin pseudogene lacking intervening sequences.</title>
        <authorList>
            <person name="Stein J.P."/>
            <person name="Munjaal R.P."/>
            <person name="Lagace L."/>
            <person name="Lai E.C."/>
            <person name="O'Malley B.W."/>
            <person name="Means A.R."/>
        </authorList>
    </citation>
    <scope>NUCLEOTIDE SEQUENCE [GENOMIC DNA]</scope>
</reference>
<evidence type="ECO:0000250" key="1"/>
<evidence type="ECO:0000255" key="2">
    <source>
        <dbReference type="PROSITE-ProRule" id="PRU00448"/>
    </source>
</evidence>
<evidence type="ECO:0000305" key="3"/>
<sequence length="149" mass="16887">MAERLSEEQIAEFKEAFSLFDRDGDGCITTMELGTVMRSLGQNPTEAELQDMVGEVDADGSGTIDFPEFLSLMARKMRDSDSEEEIREAFRVFDKDGNGYISAAELRHVMTNLGEKLTDEEVDEMIKEADCNNDGQVNYEEFVRMMTEK</sequence>
<dbReference type="EMBL" id="K00510">
    <property type="protein sequence ID" value="AAA48693.1"/>
    <property type="molecule type" value="Genomic_DNA"/>
</dbReference>
<dbReference type="PIR" id="A03026">
    <property type="entry name" value="MCCHM"/>
</dbReference>
<dbReference type="SMR" id="P02597"/>
<dbReference type="FunCoup" id="P02597">
    <property type="interactions" value="510"/>
</dbReference>
<dbReference type="STRING" id="9031.ENSGALP00000039444"/>
<dbReference type="PaxDb" id="9031-ENSGALP00000039444"/>
<dbReference type="VEuPathDB" id="HostDB:geneid_416692"/>
<dbReference type="eggNOG" id="KOG0027">
    <property type="taxonomic scope" value="Eukaryota"/>
</dbReference>
<dbReference type="InParanoid" id="P02597"/>
<dbReference type="PhylomeDB" id="P02597"/>
<dbReference type="Proteomes" id="UP000000539">
    <property type="component" value="Unassembled WGS sequence"/>
</dbReference>
<dbReference type="GO" id="GO:0005813">
    <property type="term" value="C:centrosome"/>
    <property type="evidence" value="ECO:0000318"/>
    <property type="project" value="GO_Central"/>
</dbReference>
<dbReference type="GO" id="GO:0005737">
    <property type="term" value="C:cytoplasm"/>
    <property type="evidence" value="ECO:0000318"/>
    <property type="project" value="GO_Central"/>
</dbReference>
<dbReference type="GO" id="GO:0043209">
    <property type="term" value="C:myelin sheath"/>
    <property type="evidence" value="ECO:0000318"/>
    <property type="project" value="GO_Central"/>
</dbReference>
<dbReference type="GO" id="GO:0005509">
    <property type="term" value="F:calcium ion binding"/>
    <property type="evidence" value="ECO:0000318"/>
    <property type="project" value="GO_Central"/>
</dbReference>
<dbReference type="CDD" id="cd00051">
    <property type="entry name" value="EFh"/>
    <property type="match status" value="2"/>
</dbReference>
<dbReference type="FunFam" id="1.10.238.10:FF:000003">
    <property type="entry name" value="Calmodulin A"/>
    <property type="match status" value="1"/>
</dbReference>
<dbReference type="Gene3D" id="1.10.238.10">
    <property type="entry name" value="EF-hand"/>
    <property type="match status" value="3"/>
</dbReference>
<dbReference type="InterPro" id="IPR050230">
    <property type="entry name" value="CALM/Myosin/TropC-like"/>
</dbReference>
<dbReference type="InterPro" id="IPR011992">
    <property type="entry name" value="EF-hand-dom_pair"/>
</dbReference>
<dbReference type="InterPro" id="IPR018247">
    <property type="entry name" value="EF_Hand_1_Ca_BS"/>
</dbReference>
<dbReference type="InterPro" id="IPR002048">
    <property type="entry name" value="EF_hand_dom"/>
</dbReference>
<dbReference type="PANTHER" id="PTHR23048:SF0">
    <property type="entry name" value="CALMODULIN LIKE 3"/>
    <property type="match status" value="1"/>
</dbReference>
<dbReference type="PANTHER" id="PTHR23048">
    <property type="entry name" value="MYOSIN LIGHT CHAIN 1, 3"/>
    <property type="match status" value="1"/>
</dbReference>
<dbReference type="Pfam" id="PF13499">
    <property type="entry name" value="EF-hand_7"/>
    <property type="match status" value="2"/>
</dbReference>
<dbReference type="SMART" id="SM00054">
    <property type="entry name" value="EFh"/>
    <property type="match status" value="4"/>
</dbReference>
<dbReference type="SUPFAM" id="SSF47473">
    <property type="entry name" value="EF-hand"/>
    <property type="match status" value="1"/>
</dbReference>
<dbReference type="PROSITE" id="PS00018">
    <property type="entry name" value="EF_HAND_1"/>
    <property type="match status" value="4"/>
</dbReference>
<dbReference type="PROSITE" id="PS50222">
    <property type="entry name" value="EF_HAND_2"/>
    <property type="match status" value="4"/>
</dbReference>
<protein>
    <recommendedName>
        <fullName>Calmodulin, striated muscle</fullName>
    </recommendedName>
</protein>
<comment type="miscellaneous">
    <text>This sequence differs from other calmodulin sequences by at least 13%. Many of the differences are non-conservative and some probably render the first and fourth potential calcium-binding regions nonfunctional.</text>
</comment>
<comment type="miscellaneous">
    <text>The authors' data suggest that there are at least two different calmodulin genes in the chicken genome, CCM1 and CCL1. Whereas CCL1 is thought to be the primary gene responsible for production of calmodulin, CCM1 codes for the sequence shown and is expressed only in cardiac and skeletal, not smooth, muscle.</text>
</comment>
<comment type="similarity">
    <text evidence="3">Belongs to the calmodulin family.</text>
</comment>
<name>CALMS_CHICK</name>
<gene>
    <name type="primary">CCM1</name>
</gene>
<accession>P02597</accession>
<proteinExistence type="inferred from homology"/>
<keyword id="KW-0106">Calcium</keyword>
<keyword id="KW-0479">Metal-binding</keyword>
<keyword id="KW-0488">Methylation</keyword>
<keyword id="KW-1185">Reference proteome</keyword>
<keyword id="KW-0677">Repeat</keyword>
<organism>
    <name type="scientific">Gallus gallus</name>
    <name type="common">Chicken</name>
    <dbReference type="NCBI Taxonomy" id="9031"/>
    <lineage>
        <taxon>Eukaryota</taxon>
        <taxon>Metazoa</taxon>
        <taxon>Chordata</taxon>
        <taxon>Craniata</taxon>
        <taxon>Vertebrata</taxon>
        <taxon>Euteleostomi</taxon>
        <taxon>Archelosauria</taxon>
        <taxon>Archosauria</taxon>
        <taxon>Dinosauria</taxon>
        <taxon>Saurischia</taxon>
        <taxon>Theropoda</taxon>
        <taxon>Coelurosauria</taxon>
        <taxon>Aves</taxon>
        <taxon>Neognathae</taxon>
        <taxon>Galloanserae</taxon>
        <taxon>Galliformes</taxon>
        <taxon>Phasianidae</taxon>
        <taxon>Phasianinae</taxon>
        <taxon>Gallus</taxon>
    </lineage>
</organism>
<feature type="initiator methionine" description="Removed" evidence="1">
    <location>
        <position position="1"/>
    </location>
</feature>
<feature type="chain" id="PRO_0000198330" description="Calmodulin, striated muscle">
    <location>
        <begin position="2"/>
        <end position="149"/>
    </location>
</feature>
<feature type="domain" description="EF-hand 1" evidence="2">
    <location>
        <begin position="8"/>
        <end position="43"/>
    </location>
</feature>
<feature type="domain" description="EF-hand 2" evidence="2">
    <location>
        <begin position="44"/>
        <end position="79"/>
    </location>
</feature>
<feature type="domain" description="EF-hand 3" evidence="2">
    <location>
        <begin position="81"/>
        <end position="116"/>
    </location>
</feature>
<feature type="domain" description="EF-hand 4" evidence="2">
    <location>
        <begin position="117"/>
        <end position="149"/>
    </location>
</feature>
<feature type="binding site" evidence="2">
    <location>
        <position position="21"/>
    </location>
    <ligand>
        <name>Ca(2+)</name>
        <dbReference type="ChEBI" id="CHEBI:29108"/>
        <label>1</label>
    </ligand>
</feature>
<feature type="binding site" evidence="2">
    <location>
        <position position="23"/>
    </location>
    <ligand>
        <name>Ca(2+)</name>
        <dbReference type="ChEBI" id="CHEBI:29108"/>
        <label>1</label>
    </ligand>
</feature>
<feature type="binding site" evidence="2">
    <location>
        <position position="25"/>
    </location>
    <ligand>
        <name>Ca(2+)</name>
        <dbReference type="ChEBI" id="CHEBI:29108"/>
        <label>1</label>
    </ligand>
</feature>
<feature type="binding site" evidence="2">
    <location>
        <position position="27"/>
    </location>
    <ligand>
        <name>Ca(2+)</name>
        <dbReference type="ChEBI" id="CHEBI:29108"/>
        <label>1</label>
    </ligand>
</feature>
<feature type="binding site" evidence="2">
    <location>
        <position position="32"/>
    </location>
    <ligand>
        <name>Ca(2+)</name>
        <dbReference type="ChEBI" id="CHEBI:29108"/>
        <label>1</label>
    </ligand>
</feature>
<feature type="binding site" evidence="2">
    <location>
        <position position="57"/>
    </location>
    <ligand>
        <name>Ca(2+)</name>
        <dbReference type="ChEBI" id="CHEBI:29108"/>
        <label>2</label>
    </ligand>
</feature>
<feature type="binding site" evidence="2">
    <location>
        <position position="59"/>
    </location>
    <ligand>
        <name>Ca(2+)</name>
        <dbReference type="ChEBI" id="CHEBI:29108"/>
        <label>2</label>
    </ligand>
</feature>
<feature type="binding site" evidence="2">
    <location>
        <position position="61"/>
    </location>
    <ligand>
        <name>Ca(2+)</name>
        <dbReference type="ChEBI" id="CHEBI:29108"/>
        <label>2</label>
    </ligand>
</feature>
<feature type="binding site" evidence="2">
    <location>
        <position position="63"/>
    </location>
    <ligand>
        <name>Ca(2+)</name>
        <dbReference type="ChEBI" id="CHEBI:29108"/>
        <label>2</label>
    </ligand>
</feature>
<feature type="binding site" evidence="2">
    <location>
        <position position="68"/>
    </location>
    <ligand>
        <name>Ca(2+)</name>
        <dbReference type="ChEBI" id="CHEBI:29108"/>
        <label>2</label>
    </ligand>
</feature>
<feature type="binding site" evidence="2">
    <location>
        <position position="94"/>
    </location>
    <ligand>
        <name>Ca(2+)</name>
        <dbReference type="ChEBI" id="CHEBI:29108"/>
        <label>3</label>
    </ligand>
</feature>
<feature type="binding site" evidence="2">
    <location>
        <position position="96"/>
    </location>
    <ligand>
        <name>Ca(2+)</name>
        <dbReference type="ChEBI" id="CHEBI:29108"/>
        <label>3</label>
    </ligand>
</feature>
<feature type="binding site" evidence="2">
    <location>
        <position position="98"/>
    </location>
    <ligand>
        <name>Ca(2+)</name>
        <dbReference type="ChEBI" id="CHEBI:29108"/>
        <label>3</label>
    </ligand>
</feature>
<feature type="binding site" evidence="2">
    <location>
        <position position="100"/>
    </location>
    <ligand>
        <name>Ca(2+)</name>
        <dbReference type="ChEBI" id="CHEBI:29108"/>
        <label>3</label>
    </ligand>
</feature>
<feature type="binding site" evidence="2">
    <location>
        <position position="105"/>
    </location>
    <ligand>
        <name>Ca(2+)</name>
        <dbReference type="ChEBI" id="CHEBI:29108"/>
        <label>3</label>
    </ligand>
</feature>
<feature type="binding site" evidence="2">
    <location>
        <position position="130"/>
    </location>
    <ligand>
        <name>Ca(2+)</name>
        <dbReference type="ChEBI" id="CHEBI:29108"/>
        <label>4</label>
    </ligand>
</feature>
<feature type="binding site" evidence="2">
    <location>
        <position position="132"/>
    </location>
    <ligand>
        <name>Ca(2+)</name>
        <dbReference type="ChEBI" id="CHEBI:29108"/>
        <label>4</label>
    </ligand>
</feature>
<feature type="binding site" evidence="2">
    <location>
        <position position="134"/>
    </location>
    <ligand>
        <name>Ca(2+)</name>
        <dbReference type="ChEBI" id="CHEBI:29108"/>
        <label>4</label>
    </ligand>
</feature>
<feature type="binding site" evidence="2">
    <location>
        <position position="136"/>
    </location>
    <ligand>
        <name>Ca(2+)</name>
        <dbReference type="ChEBI" id="CHEBI:29108"/>
        <label>4</label>
    </ligand>
</feature>
<feature type="binding site" evidence="2">
    <location>
        <position position="141"/>
    </location>
    <ligand>
        <name>Ca(2+)</name>
        <dbReference type="ChEBI" id="CHEBI:29108"/>
        <label>4</label>
    </ligand>
</feature>
<feature type="modified residue" description="N6,N6,N6-trimethyllysine" evidence="1">
    <location>
        <position position="116"/>
    </location>
</feature>